<reference key="1">
    <citation type="journal article" date="2001" name="Microb. Drug Resist.">
        <title>Annotated draft genomic sequence from a Streptococcus pneumoniae type 19F clinical isolate.</title>
        <authorList>
            <person name="Dopazo J."/>
            <person name="Mendoza A."/>
            <person name="Herrero J."/>
            <person name="Caldara F."/>
            <person name="Humbert Y."/>
            <person name="Friedli L."/>
            <person name="Guerrier M."/>
            <person name="Grand-Schenk E."/>
            <person name="Gandin C."/>
            <person name="de Francesco M."/>
            <person name="Polissi A."/>
            <person name="Buell G."/>
            <person name="Feger G."/>
            <person name="Garcia E."/>
            <person name="Peitsch M."/>
            <person name="Garcia-Bustos J.F."/>
        </authorList>
    </citation>
    <scope>NUCLEOTIDE SEQUENCE [LARGE SCALE GENOMIC DNA]</scope>
    <source>
        <strain>G54</strain>
    </source>
</reference>
<reference key="2">
    <citation type="submission" date="2008-03" db="EMBL/GenBank/DDBJ databases">
        <title>Pneumococcal beta glucoside metabolism investigated by whole genome comparison.</title>
        <authorList>
            <person name="Mulas L."/>
            <person name="Trappetti C."/>
            <person name="Hakenbeck R."/>
            <person name="Iannelli F."/>
            <person name="Pozzi G."/>
            <person name="Davidsen T.M."/>
            <person name="Tettelin H."/>
            <person name="Oggioni M."/>
        </authorList>
    </citation>
    <scope>NUCLEOTIDE SEQUENCE [LARGE SCALE GENOMIC DNA]</scope>
    <source>
        <strain>G54</strain>
    </source>
</reference>
<keyword id="KW-0240">DNA-directed RNA polymerase</keyword>
<keyword id="KW-0548">Nucleotidyltransferase</keyword>
<keyword id="KW-0804">Transcription</keyword>
<keyword id="KW-0808">Transferase</keyword>
<comment type="function">
    <text evidence="1">Promotes RNA polymerase assembly. Latches the N- and C-terminal regions of the beta' subunit thereby facilitating its interaction with the beta and alpha subunits.</text>
</comment>
<comment type="catalytic activity">
    <reaction evidence="1">
        <text>RNA(n) + a ribonucleoside 5'-triphosphate = RNA(n+1) + diphosphate</text>
        <dbReference type="Rhea" id="RHEA:21248"/>
        <dbReference type="Rhea" id="RHEA-COMP:14527"/>
        <dbReference type="Rhea" id="RHEA-COMP:17342"/>
        <dbReference type="ChEBI" id="CHEBI:33019"/>
        <dbReference type="ChEBI" id="CHEBI:61557"/>
        <dbReference type="ChEBI" id="CHEBI:140395"/>
        <dbReference type="EC" id="2.7.7.6"/>
    </reaction>
</comment>
<comment type="subunit">
    <text evidence="1">The RNAP catalytic core consists of 2 alpha, 1 beta, 1 beta' and 1 omega subunit. When a sigma factor is associated with the core the holoenzyme is formed, which can initiate transcription.</text>
</comment>
<comment type="similarity">
    <text evidence="1">Belongs to the RNA polymerase subunit omega family.</text>
</comment>
<proteinExistence type="inferred from homology"/>
<accession>B5E7F9</accession>
<organism>
    <name type="scientific">Streptococcus pneumoniae serotype 19F (strain G54)</name>
    <dbReference type="NCBI Taxonomy" id="512566"/>
    <lineage>
        <taxon>Bacteria</taxon>
        <taxon>Bacillati</taxon>
        <taxon>Bacillota</taxon>
        <taxon>Bacilli</taxon>
        <taxon>Lactobacillales</taxon>
        <taxon>Streptococcaceae</taxon>
        <taxon>Streptococcus</taxon>
    </lineage>
</organism>
<sequence>MLKPSIDTLLDKVPSKYSLVILEAKRAHELEAGAPATQGFKSEKSTLRALEEIESGNVTIHPDPEGKREAVRRRIEEEKRRKEEEEKKIKEQIAKEKEDGEKI</sequence>
<protein>
    <recommendedName>
        <fullName evidence="1">DNA-directed RNA polymerase subunit omega</fullName>
        <shortName evidence="1">RNAP omega subunit</shortName>
        <ecNumber evidence="1">2.7.7.6</ecNumber>
    </recommendedName>
    <alternativeName>
        <fullName evidence="1">RNA polymerase omega subunit</fullName>
    </alternativeName>
    <alternativeName>
        <fullName evidence="1">Transcriptase subunit omega</fullName>
    </alternativeName>
</protein>
<gene>
    <name evidence="1" type="primary">rpoZ</name>
    <name type="ordered locus">SPG_1643</name>
</gene>
<feature type="chain" id="PRO_1000121279" description="DNA-directed RNA polymerase subunit omega">
    <location>
        <begin position="1"/>
        <end position="103"/>
    </location>
</feature>
<feature type="region of interest" description="Disordered" evidence="2">
    <location>
        <begin position="52"/>
        <end position="103"/>
    </location>
</feature>
<feature type="compositionally biased region" description="Basic and acidic residues" evidence="2">
    <location>
        <begin position="62"/>
        <end position="103"/>
    </location>
</feature>
<evidence type="ECO:0000255" key="1">
    <source>
        <dbReference type="HAMAP-Rule" id="MF_00366"/>
    </source>
</evidence>
<evidence type="ECO:0000256" key="2">
    <source>
        <dbReference type="SAM" id="MobiDB-lite"/>
    </source>
</evidence>
<dbReference type="EC" id="2.7.7.6" evidence="1"/>
<dbReference type="EMBL" id="CP001015">
    <property type="protein sequence ID" value="ACF56264.1"/>
    <property type="molecule type" value="Genomic_DNA"/>
</dbReference>
<dbReference type="SMR" id="B5E7F9"/>
<dbReference type="KEGG" id="spx:SPG_1643"/>
<dbReference type="HOGENOM" id="CLU_125406_0_0_9"/>
<dbReference type="GO" id="GO:0000428">
    <property type="term" value="C:DNA-directed RNA polymerase complex"/>
    <property type="evidence" value="ECO:0007669"/>
    <property type="project" value="UniProtKB-KW"/>
</dbReference>
<dbReference type="GO" id="GO:0003677">
    <property type="term" value="F:DNA binding"/>
    <property type="evidence" value="ECO:0007669"/>
    <property type="project" value="UniProtKB-UniRule"/>
</dbReference>
<dbReference type="GO" id="GO:0003899">
    <property type="term" value="F:DNA-directed RNA polymerase activity"/>
    <property type="evidence" value="ECO:0007669"/>
    <property type="project" value="UniProtKB-UniRule"/>
</dbReference>
<dbReference type="GO" id="GO:0006351">
    <property type="term" value="P:DNA-templated transcription"/>
    <property type="evidence" value="ECO:0007669"/>
    <property type="project" value="UniProtKB-UniRule"/>
</dbReference>
<dbReference type="Gene3D" id="3.90.940.10">
    <property type="match status" value="1"/>
</dbReference>
<dbReference type="HAMAP" id="MF_00366">
    <property type="entry name" value="RNApol_bact_RpoZ"/>
    <property type="match status" value="1"/>
</dbReference>
<dbReference type="InterPro" id="IPR003716">
    <property type="entry name" value="DNA-dir_RNA_pol_omega"/>
</dbReference>
<dbReference type="InterPro" id="IPR006110">
    <property type="entry name" value="Pol_omega/Rpo6/RPB6"/>
</dbReference>
<dbReference type="InterPro" id="IPR036161">
    <property type="entry name" value="RPB6/omega-like_sf"/>
</dbReference>
<dbReference type="NCBIfam" id="TIGR00690">
    <property type="entry name" value="rpoZ"/>
    <property type="match status" value="1"/>
</dbReference>
<dbReference type="PANTHER" id="PTHR34476">
    <property type="entry name" value="DNA-DIRECTED RNA POLYMERASE SUBUNIT OMEGA"/>
    <property type="match status" value="1"/>
</dbReference>
<dbReference type="PANTHER" id="PTHR34476:SF1">
    <property type="entry name" value="DNA-DIRECTED RNA POLYMERASE SUBUNIT OMEGA"/>
    <property type="match status" value="1"/>
</dbReference>
<dbReference type="Pfam" id="PF01192">
    <property type="entry name" value="RNA_pol_Rpb6"/>
    <property type="match status" value="1"/>
</dbReference>
<dbReference type="SMART" id="SM01409">
    <property type="entry name" value="RNA_pol_Rpb6"/>
    <property type="match status" value="1"/>
</dbReference>
<dbReference type="SUPFAM" id="SSF63562">
    <property type="entry name" value="RPB6/omega subunit-like"/>
    <property type="match status" value="1"/>
</dbReference>
<name>RPOZ_STRP4</name>